<feature type="chain" id="PRO_0000258367" description="Phosphoribosylformylglycinamidine cyclo-ligase">
    <location>
        <begin position="1"/>
        <end position="345"/>
    </location>
</feature>
<proteinExistence type="inferred from homology"/>
<sequence length="345" mass="36847">MSKQSLSYKDAGVDINAGNALVDRIKPHVKRTTRPEVIGGLGGFGALCALPTKYKEPVLVSGTDGVGTKLRLAIDLNKHDTIGIDLVAMCVNDLVVQGAEPLFFLDYYATGKLDVDVATDVVAGIAEGCVQSGCALIGGETAEMPGMYHAGDYDLGGFCVGVVERAKIIDGSKVKTGDALIALGSSGPHSNGYSLIRKVIEVAGVNPATEQLAGRPLADQVLAPTKIYVKSVLELIEHVDVHAIAHLTGGGFWENIPRVLPEDVKVVINENSWEWQPVFKWLQEQGNITRHEMYRTFNCGVGMVIALPQADAEKALQVLKAAGENAWLIGQVEPLNAGEEQVIIR</sequence>
<dbReference type="EC" id="6.3.3.1" evidence="1"/>
<dbReference type="EMBL" id="AE016827">
    <property type="protein sequence ID" value="AAU37233.1"/>
    <property type="molecule type" value="Genomic_DNA"/>
</dbReference>
<dbReference type="RefSeq" id="WP_011199805.1">
    <property type="nucleotide sequence ID" value="NC_006300.1"/>
</dbReference>
<dbReference type="SMR" id="Q65UX7"/>
<dbReference type="STRING" id="221988.MS0626"/>
<dbReference type="KEGG" id="msu:MS0626"/>
<dbReference type="eggNOG" id="COG0150">
    <property type="taxonomic scope" value="Bacteria"/>
</dbReference>
<dbReference type="HOGENOM" id="CLU_047116_0_0_6"/>
<dbReference type="OrthoDB" id="9777881at2"/>
<dbReference type="UniPathway" id="UPA00074">
    <property type="reaction ID" value="UER00129"/>
</dbReference>
<dbReference type="Proteomes" id="UP000000607">
    <property type="component" value="Chromosome"/>
</dbReference>
<dbReference type="GO" id="GO:0005829">
    <property type="term" value="C:cytosol"/>
    <property type="evidence" value="ECO:0007669"/>
    <property type="project" value="TreeGrafter"/>
</dbReference>
<dbReference type="GO" id="GO:0005524">
    <property type="term" value="F:ATP binding"/>
    <property type="evidence" value="ECO:0007669"/>
    <property type="project" value="UniProtKB-KW"/>
</dbReference>
<dbReference type="GO" id="GO:0004637">
    <property type="term" value="F:phosphoribosylamine-glycine ligase activity"/>
    <property type="evidence" value="ECO:0007669"/>
    <property type="project" value="TreeGrafter"/>
</dbReference>
<dbReference type="GO" id="GO:0004641">
    <property type="term" value="F:phosphoribosylformylglycinamidine cyclo-ligase activity"/>
    <property type="evidence" value="ECO:0007669"/>
    <property type="project" value="UniProtKB-UniRule"/>
</dbReference>
<dbReference type="GO" id="GO:0006189">
    <property type="term" value="P:'de novo' IMP biosynthetic process"/>
    <property type="evidence" value="ECO:0007669"/>
    <property type="project" value="UniProtKB-UniRule"/>
</dbReference>
<dbReference type="GO" id="GO:0046084">
    <property type="term" value="P:adenine biosynthetic process"/>
    <property type="evidence" value="ECO:0007669"/>
    <property type="project" value="TreeGrafter"/>
</dbReference>
<dbReference type="CDD" id="cd02196">
    <property type="entry name" value="PurM"/>
    <property type="match status" value="1"/>
</dbReference>
<dbReference type="FunFam" id="3.30.1330.10:FF:000001">
    <property type="entry name" value="Phosphoribosylformylglycinamidine cyclo-ligase"/>
    <property type="match status" value="1"/>
</dbReference>
<dbReference type="FunFam" id="3.90.650.10:FF:000001">
    <property type="entry name" value="Phosphoribosylformylglycinamidine cyclo-ligase"/>
    <property type="match status" value="1"/>
</dbReference>
<dbReference type="Gene3D" id="3.90.650.10">
    <property type="entry name" value="PurM-like C-terminal domain"/>
    <property type="match status" value="1"/>
</dbReference>
<dbReference type="Gene3D" id="3.30.1330.10">
    <property type="entry name" value="PurM-like, N-terminal domain"/>
    <property type="match status" value="1"/>
</dbReference>
<dbReference type="HAMAP" id="MF_00741">
    <property type="entry name" value="AIRS"/>
    <property type="match status" value="1"/>
</dbReference>
<dbReference type="InterPro" id="IPR010918">
    <property type="entry name" value="PurM-like_C_dom"/>
</dbReference>
<dbReference type="InterPro" id="IPR036676">
    <property type="entry name" value="PurM-like_C_sf"/>
</dbReference>
<dbReference type="InterPro" id="IPR016188">
    <property type="entry name" value="PurM-like_N"/>
</dbReference>
<dbReference type="InterPro" id="IPR036921">
    <property type="entry name" value="PurM-like_N_sf"/>
</dbReference>
<dbReference type="InterPro" id="IPR004733">
    <property type="entry name" value="PurM_cligase"/>
</dbReference>
<dbReference type="NCBIfam" id="TIGR00878">
    <property type="entry name" value="purM"/>
    <property type="match status" value="1"/>
</dbReference>
<dbReference type="PANTHER" id="PTHR10520:SF12">
    <property type="entry name" value="TRIFUNCTIONAL PURINE BIOSYNTHETIC PROTEIN ADENOSINE-3"/>
    <property type="match status" value="1"/>
</dbReference>
<dbReference type="PANTHER" id="PTHR10520">
    <property type="entry name" value="TRIFUNCTIONAL PURINE BIOSYNTHETIC PROTEIN ADENOSINE-3-RELATED"/>
    <property type="match status" value="1"/>
</dbReference>
<dbReference type="Pfam" id="PF00586">
    <property type="entry name" value="AIRS"/>
    <property type="match status" value="1"/>
</dbReference>
<dbReference type="Pfam" id="PF02769">
    <property type="entry name" value="AIRS_C"/>
    <property type="match status" value="1"/>
</dbReference>
<dbReference type="SUPFAM" id="SSF56042">
    <property type="entry name" value="PurM C-terminal domain-like"/>
    <property type="match status" value="1"/>
</dbReference>
<dbReference type="SUPFAM" id="SSF55326">
    <property type="entry name" value="PurM N-terminal domain-like"/>
    <property type="match status" value="1"/>
</dbReference>
<comment type="catalytic activity">
    <reaction evidence="1">
        <text>2-formamido-N(1)-(5-O-phospho-beta-D-ribosyl)acetamidine + ATP = 5-amino-1-(5-phospho-beta-D-ribosyl)imidazole + ADP + phosphate + H(+)</text>
        <dbReference type="Rhea" id="RHEA:23032"/>
        <dbReference type="ChEBI" id="CHEBI:15378"/>
        <dbReference type="ChEBI" id="CHEBI:30616"/>
        <dbReference type="ChEBI" id="CHEBI:43474"/>
        <dbReference type="ChEBI" id="CHEBI:137981"/>
        <dbReference type="ChEBI" id="CHEBI:147287"/>
        <dbReference type="ChEBI" id="CHEBI:456216"/>
        <dbReference type="EC" id="6.3.3.1"/>
    </reaction>
</comment>
<comment type="pathway">
    <text evidence="1">Purine metabolism; IMP biosynthesis via de novo pathway; 5-amino-1-(5-phospho-D-ribosyl)imidazole from N(2)-formyl-N(1)-(5-phospho-D-ribosyl)glycinamide: step 2/2.</text>
</comment>
<comment type="subcellular location">
    <subcellularLocation>
        <location evidence="1">Cytoplasm</location>
    </subcellularLocation>
</comment>
<comment type="similarity">
    <text evidence="1">Belongs to the AIR synthase family.</text>
</comment>
<reference key="1">
    <citation type="journal article" date="2004" name="Nat. Biotechnol.">
        <title>The genome sequence of the capnophilic rumen bacterium Mannheimia succiniciproducens.</title>
        <authorList>
            <person name="Hong S.H."/>
            <person name="Kim J.S."/>
            <person name="Lee S.Y."/>
            <person name="In Y.H."/>
            <person name="Choi S.S."/>
            <person name="Rih J.-K."/>
            <person name="Kim C.H."/>
            <person name="Jeong H."/>
            <person name="Hur C.G."/>
            <person name="Kim J.J."/>
        </authorList>
    </citation>
    <scope>NUCLEOTIDE SEQUENCE [LARGE SCALE GENOMIC DNA]</scope>
    <source>
        <strain>KCTC 0769BP / MBEL55E</strain>
    </source>
</reference>
<organism>
    <name type="scientific">Mannheimia succiniciproducens (strain KCTC 0769BP / MBEL55E)</name>
    <dbReference type="NCBI Taxonomy" id="221988"/>
    <lineage>
        <taxon>Bacteria</taxon>
        <taxon>Pseudomonadati</taxon>
        <taxon>Pseudomonadota</taxon>
        <taxon>Gammaproteobacteria</taxon>
        <taxon>Pasteurellales</taxon>
        <taxon>Pasteurellaceae</taxon>
        <taxon>Basfia</taxon>
    </lineage>
</organism>
<evidence type="ECO:0000255" key="1">
    <source>
        <dbReference type="HAMAP-Rule" id="MF_00741"/>
    </source>
</evidence>
<protein>
    <recommendedName>
        <fullName evidence="1">Phosphoribosylformylglycinamidine cyclo-ligase</fullName>
        <ecNumber evidence="1">6.3.3.1</ecNumber>
    </recommendedName>
    <alternativeName>
        <fullName evidence="1">AIR synthase</fullName>
    </alternativeName>
    <alternativeName>
        <fullName evidence="1">AIRS</fullName>
    </alternativeName>
    <alternativeName>
        <fullName evidence="1">Phosphoribosyl-aminoimidazole synthetase</fullName>
    </alternativeName>
</protein>
<name>PUR5_MANSM</name>
<gene>
    <name evidence="1" type="primary">purM</name>
    <name type="ordered locus">MS0626</name>
</gene>
<accession>Q65UX7</accession>
<keyword id="KW-0067">ATP-binding</keyword>
<keyword id="KW-0963">Cytoplasm</keyword>
<keyword id="KW-0436">Ligase</keyword>
<keyword id="KW-0547">Nucleotide-binding</keyword>
<keyword id="KW-0658">Purine biosynthesis</keyword>